<organism>
    <name type="scientific">Mycobacterium tuberculosis (strain ATCC 25618 / H37Rv)</name>
    <dbReference type="NCBI Taxonomy" id="83332"/>
    <lineage>
        <taxon>Bacteria</taxon>
        <taxon>Bacillati</taxon>
        <taxon>Actinomycetota</taxon>
        <taxon>Actinomycetes</taxon>
        <taxon>Mycobacteriales</taxon>
        <taxon>Mycobacteriaceae</taxon>
        <taxon>Mycobacterium</taxon>
        <taxon>Mycobacterium tuberculosis complex</taxon>
    </lineage>
</organism>
<dbReference type="EC" id="3.1.3.16" evidence="6 8"/>
<dbReference type="EC" id="2.7.11.1" evidence="6 8"/>
<dbReference type="EMBL" id="AL123456">
    <property type="protein sequence ID" value="CCP44122.1"/>
    <property type="molecule type" value="Genomic_DNA"/>
</dbReference>
<dbReference type="PIR" id="C70742">
    <property type="entry name" value="C70742"/>
</dbReference>
<dbReference type="RefSeq" id="WP_003916806.1">
    <property type="nucleotide sequence ID" value="NZ_NVQJ01000031.1"/>
</dbReference>
<dbReference type="RefSeq" id="YP_177802.1">
    <property type="nucleotide sequence ID" value="NC_000962.3"/>
</dbReference>
<dbReference type="PDB" id="3K3C">
    <property type="method" value="X-ray"/>
    <property type="resolution" value="1.62 A"/>
    <property type="chains" value="A/B/C/D=1-156"/>
</dbReference>
<dbReference type="PDB" id="3K3D">
    <property type="method" value="X-ray"/>
    <property type="resolution" value="2.30 A"/>
    <property type="chains" value="A=1-147"/>
</dbReference>
<dbReference type="PDB" id="3KE6">
    <property type="method" value="X-ray"/>
    <property type="resolution" value="2.60 A"/>
    <property type="chains" value="A/B=170-539"/>
</dbReference>
<dbReference type="PDB" id="3KX0">
    <property type="method" value="X-ray"/>
    <property type="resolution" value="2.30 A"/>
    <property type="chains" value="X=1-163"/>
</dbReference>
<dbReference type="PDBsum" id="3K3C"/>
<dbReference type="PDBsum" id="3K3D"/>
<dbReference type="PDBsum" id="3KE6"/>
<dbReference type="PDBsum" id="3KX0"/>
<dbReference type="SASBDB" id="P9WLZ7"/>
<dbReference type="SMR" id="P9WLZ7"/>
<dbReference type="FunCoup" id="P9WLZ7">
    <property type="interactions" value="1"/>
</dbReference>
<dbReference type="IntAct" id="P9WLZ7">
    <property type="interactions" value="5"/>
</dbReference>
<dbReference type="STRING" id="83332.Rv1364c"/>
<dbReference type="iPTMnet" id="P9WLZ7"/>
<dbReference type="PaxDb" id="83332-Rv1364c"/>
<dbReference type="DNASU" id="886802"/>
<dbReference type="GeneID" id="886802"/>
<dbReference type="KEGG" id="mtu:Rv1364c"/>
<dbReference type="KEGG" id="mtv:RVBD_1364c"/>
<dbReference type="TubercuList" id="Rv1364c"/>
<dbReference type="eggNOG" id="COG1366">
    <property type="taxonomic scope" value="Bacteria"/>
</dbReference>
<dbReference type="eggNOG" id="COG2172">
    <property type="taxonomic scope" value="Bacteria"/>
</dbReference>
<dbReference type="eggNOG" id="COG2208">
    <property type="taxonomic scope" value="Bacteria"/>
</dbReference>
<dbReference type="InParanoid" id="P9WLZ7"/>
<dbReference type="OrthoDB" id="163538at2"/>
<dbReference type="PhylomeDB" id="P9WLZ7"/>
<dbReference type="EvolutionaryTrace" id="P9WLZ7"/>
<dbReference type="Proteomes" id="UP000001584">
    <property type="component" value="Chromosome"/>
</dbReference>
<dbReference type="GO" id="GO:0004035">
    <property type="term" value="F:alkaline phosphatase activity"/>
    <property type="evidence" value="ECO:0000314"/>
    <property type="project" value="MTBBASE"/>
</dbReference>
<dbReference type="GO" id="GO:0005524">
    <property type="term" value="F:ATP binding"/>
    <property type="evidence" value="ECO:0007669"/>
    <property type="project" value="UniProtKB-KW"/>
</dbReference>
<dbReference type="GO" id="GO:0042802">
    <property type="term" value="F:identical protein binding"/>
    <property type="evidence" value="ECO:0000353"/>
    <property type="project" value="IntAct"/>
</dbReference>
<dbReference type="GO" id="GO:0000287">
    <property type="term" value="F:magnesium ion binding"/>
    <property type="evidence" value="ECO:0000314"/>
    <property type="project" value="MTBBASE"/>
</dbReference>
<dbReference type="GO" id="GO:0030145">
    <property type="term" value="F:manganese ion binding"/>
    <property type="evidence" value="ECO:0000314"/>
    <property type="project" value="MTBBASE"/>
</dbReference>
<dbReference type="GO" id="GO:0016791">
    <property type="term" value="F:phosphatase activity"/>
    <property type="evidence" value="ECO:0000314"/>
    <property type="project" value="MTBBASE"/>
</dbReference>
<dbReference type="GO" id="GO:0004674">
    <property type="term" value="F:protein serine/threonine kinase activity"/>
    <property type="evidence" value="ECO:0007669"/>
    <property type="project" value="UniProtKB-KW"/>
</dbReference>
<dbReference type="GO" id="GO:0004722">
    <property type="term" value="F:protein serine/threonine phosphatase activity"/>
    <property type="evidence" value="ECO:0007669"/>
    <property type="project" value="UniProtKB-EC"/>
</dbReference>
<dbReference type="GO" id="GO:0006355">
    <property type="term" value="P:regulation of DNA-templated transcription"/>
    <property type="evidence" value="ECO:0000314"/>
    <property type="project" value="MTBBASE"/>
</dbReference>
<dbReference type="CDD" id="cd16936">
    <property type="entry name" value="HATPase_RsbW-like"/>
    <property type="match status" value="1"/>
</dbReference>
<dbReference type="CDD" id="cd07043">
    <property type="entry name" value="STAS_anti-anti-sigma_factors"/>
    <property type="match status" value="1"/>
</dbReference>
<dbReference type="FunFam" id="3.60.40.10:FF:000005">
    <property type="entry name" value="Serine/threonine protein phosphatase"/>
    <property type="match status" value="1"/>
</dbReference>
<dbReference type="Gene3D" id="3.30.565.10">
    <property type="entry name" value="Histidine kinase-like ATPase, C-terminal domain"/>
    <property type="match status" value="1"/>
</dbReference>
<dbReference type="Gene3D" id="3.30.450.20">
    <property type="entry name" value="PAS domain"/>
    <property type="match status" value="1"/>
</dbReference>
<dbReference type="Gene3D" id="3.60.40.10">
    <property type="entry name" value="PPM-type phosphatase domain"/>
    <property type="match status" value="1"/>
</dbReference>
<dbReference type="Gene3D" id="3.30.750.24">
    <property type="entry name" value="STAS domain"/>
    <property type="match status" value="1"/>
</dbReference>
<dbReference type="InterPro" id="IPR052016">
    <property type="entry name" value="Bact_Sigma-Reg"/>
</dbReference>
<dbReference type="InterPro" id="IPR036890">
    <property type="entry name" value="HATPase_C_sf"/>
</dbReference>
<dbReference type="InterPro" id="IPR000014">
    <property type="entry name" value="PAS"/>
</dbReference>
<dbReference type="InterPro" id="IPR000700">
    <property type="entry name" value="PAS-assoc_C"/>
</dbReference>
<dbReference type="InterPro" id="IPR035965">
    <property type="entry name" value="PAS-like_dom_sf"/>
</dbReference>
<dbReference type="InterPro" id="IPR013656">
    <property type="entry name" value="PAS_4"/>
</dbReference>
<dbReference type="InterPro" id="IPR036457">
    <property type="entry name" value="PPM-type-like_dom_sf"/>
</dbReference>
<dbReference type="InterPro" id="IPR001932">
    <property type="entry name" value="PPM-type_phosphatase-like_dom"/>
</dbReference>
<dbReference type="InterPro" id="IPR002645">
    <property type="entry name" value="STAS_dom"/>
</dbReference>
<dbReference type="InterPro" id="IPR036513">
    <property type="entry name" value="STAS_dom_sf"/>
</dbReference>
<dbReference type="NCBIfam" id="TIGR00229">
    <property type="entry name" value="sensory_box"/>
    <property type="match status" value="1"/>
</dbReference>
<dbReference type="PANTHER" id="PTHR43156:SF2">
    <property type="entry name" value="STAGE II SPORULATION PROTEIN E"/>
    <property type="match status" value="1"/>
</dbReference>
<dbReference type="PANTHER" id="PTHR43156">
    <property type="entry name" value="STAGE II SPORULATION PROTEIN E-RELATED"/>
    <property type="match status" value="1"/>
</dbReference>
<dbReference type="Pfam" id="PF13581">
    <property type="entry name" value="HATPase_c_2"/>
    <property type="match status" value="1"/>
</dbReference>
<dbReference type="Pfam" id="PF08448">
    <property type="entry name" value="PAS_4"/>
    <property type="match status" value="1"/>
</dbReference>
<dbReference type="Pfam" id="PF07228">
    <property type="entry name" value="SpoIIE"/>
    <property type="match status" value="1"/>
</dbReference>
<dbReference type="Pfam" id="PF01740">
    <property type="entry name" value="STAS"/>
    <property type="match status" value="1"/>
</dbReference>
<dbReference type="SMART" id="SM00331">
    <property type="entry name" value="PP2C_SIG"/>
    <property type="match status" value="1"/>
</dbReference>
<dbReference type="SUPFAM" id="SSF55874">
    <property type="entry name" value="ATPase domain of HSP90 chaperone/DNA topoisomerase II/histidine kinase"/>
    <property type="match status" value="1"/>
</dbReference>
<dbReference type="SUPFAM" id="SSF55785">
    <property type="entry name" value="PYP-like sensor domain (PAS domain)"/>
    <property type="match status" value="1"/>
</dbReference>
<dbReference type="SUPFAM" id="SSF52091">
    <property type="entry name" value="SpoIIaa-like"/>
    <property type="match status" value="1"/>
</dbReference>
<dbReference type="PROSITE" id="PS50113">
    <property type="entry name" value="PAC"/>
    <property type="match status" value="1"/>
</dbReference>
<dbReference type="PROSITE" id="PS51746">
    <property type="entry name" value="PPM_2"/>
    <property type="match status" value="1"/>
</dbReference>
<dbReference type="PROSITE" id="PS50801">
    <property type="entry name" value="STAS"/>
    <property type="match status" value="1"/>
</dbReference>
<keyword id="KW-0002">3D-structure</keyword>
<keyword id="KW-0067">ATP-binding</keyword>
<keyword id="KW-0378">Hydrolase</keyword>
<keyword id="KW-0418">Kinase</keyword>
<keyword id="KW-0460">Magnesium</keyword>
<keyword id="KW-0464">Manganese</keyword>
<keyword id="KW-0479">Metal-binding</keyword>
<keyword id="KW-0547">Nucleotide-binding</keyword>
<keyword id="KW-0597">Phosphoprotein</keyword>
<keyword id="KW-0904">Protein phosphatase</keyword>
<keyword id="KW-1185">Reference proteome</keyword>
<keyword id="KW-0723">Serine/threonine-protein kinase</keyword>
<keyword id="KW-0808">Transferase</keyword>
<sequence length="653" mass="69524">MAAEMDWDKTVGAAEDVRRIFEHIPAILVGLEGPDHRFVAVNAAYRGFSPLLDTVGQPAREVYPELEGQQIYEMLDRVYQTGEPQSGSEWRLQTDYDGSGVEERYFDFVVTPRRRADGSIEGVQLIVDDVTSRVRARQAAEARVEELSERYRNVRDSATVMQQALLAASVPVVPGADIAAEYLVAAEDTAAGGDWFDALALGDRLVLVVGDVVGHGVEAAAVMSQLRTALRMQISAGYTVVEALEAVDRFHKQVPGSKSATMCVGSLDFTSGEFQYCTAGHPPPLLVTADASARYVEPTGAGPLGSGTGFPVRSEVLNIGDAILFYTDGLIERPGRPLEASTAEFADLAASIASGSGGFVLDAPARPIDRLCSDTLELLLRSTGYNDDVTLLAMQRRAPTPPLHITLDATINAARTVRAQLREWLAEIGADHSDIADIVHAISEFVENAVEHGYATDVSKGIVVAAALAGDGNVRASVIDRGQWKDHRDGARGRGRGLAMAEALVSEARIMHGAGGTTATLTHRLSRPARFVTDTMVRRAAFQQTIDSEFVSLVESGRIVVRGDVDSTTAATLDRQIAVESRSGIAPVTIDLSAVTHLGSAGVGALAAACDRARKQGTECVLVAPPGSPAHHVLSLVQLPVVGADTEDIFAQE</sequence>
<evidence type="ECO:0000255" key="1">
    <source>
        <dbReference type="PROSITE-ProRule" id="PRU00141"/>
    </source>
</evidence>
<evidence type="ECO:0000255" key="2">
    <source>
        <dbReference type="PROSITE-ProRule" id="PRU00198"/>
    </source>
</evidence>
<evidence type="ECO:0000255" key="3">
    <source>
        <dbReference type="PROSITE-ProRule" id="PRU01082"/>
    </source>
</evidence>
<evidence type="ECO:0000269" key="4">
    <source>
    </source>
</evidence>
<evidence type="ECO:0000269" key="5">
    <source>
    </source>
</evidence>
<evidence type="ECO:0000269" key="6">
    <source>
    </source>
</evidence>
<evidence type="ECO:0000269" key="7">
    <source>
    </source>
</evidence>
<evidence type="ECO:0000269" key="8">
    <source>
    </source>
</evidence>
<evidence type="ECO:0000303" key="9">
    <source>
    </source>
</evidence>
<evidence type="ECO:0000303" key="10">
    <source>
    </source>
</evidence>
<evidence type="ECO:0000303" key="11">
    <source>
    </source>
</evidence>
<evidence type="ECO:0000305" key="12"/>
<evidence type="ECO:0000305" key="13">
    <source>
    </source>
</evidence>
<evidence type="ECO:0000305" key="14">
    <source>
    </source>
</evidence>
<evidence type="ECO:0007744" key="15">
    <source>
        <dbReference type="PDB" id="3K3C"/>
    </source>
</evidence>
<evidence type="ECO:0007744" key="16">
    <source>
        <dbReference type="PDB" id="3K3D"/>
    </source>
</evidence>
<evidence type="ECO:0007744" key="17">
    <source>
        <dbReference type="PDB" id="3KE6"/>
    </source>
</evidence>
<evidence type="ECO:0007744" key="18">
    <source>
        <dbReference type="PDB" id="3KX0"/>
    </source>
</evidence>
<evidence type="ECO:0007829" key="19">
    <source>
        <dbReference type="PDB" id="3K3C"/>
    </source>
</evidence>
<evidence type="ECO:0007829" key="20">
    <source>
        <dbReference type="PDB" id="3KE6"/>
    </source>
</evidence>
<reference key="1">
    <citation type="journal article" date="1998" name="Nature">
        <title>Deciphering the biology of Mycobacterium tuberculosis from the complete genome sequence.</title>
        <authorList>
            <person name="Cole S.T."/>
            <person name="Brosch R."/>
            <person name="Parkhill J."/>
            <person name="Garnier T."/>
            <person name="Churcher C.M."/>
            <person name="Harris D.E."/>
            <person name="Gordon S.V."/>
            <person name="Eiglmeier K."/>
            <person name="Gas S."/>
            <person name="Barry C.E. III"/>
            <person name="Tekaia F."/>
            <person name="Badcock K."/>
            <person name="Basham D."/>
            <person name="Brown D."/>
            <person name="Chillingworth T."/>
            <person name="Connor R."/>
            <person name="Davies R.M."/>
            <person name="Devlin K."/>
            <person name="Feltwell T."/>
            <person name="Gentles S."/>
            <person name="Hamlin N."/>
            <person name="Holroyd S."/>
            <person name="Hornsby T."/>
            <person name="Jagels K."/>
            <person name="Krogh A."/>
            <person name="McLean J."/>
            <person name="Moule S."/>
            <person name="Murphy L.D."/>
            <person name="Oliver S."/>
            <person name="Osborne J."/>
            <person name="Quail M.A."/>
            <person name="Rajandream M.A."/>
            <person name="Rogers J."/>
            <person name="Rutter S."/>
            <person name="Seeger K."/>
            <person name="Skelton S."/>
            <person name="Squares S."/>
            <person name="Squares R."/>
            <person name="Sulston J.E."/>
            <person name="Taylor K."/>
            <person name="Whitehead S."/>
            <person name="Barrell B.G."/>
        </authorList>
    </citation>
    <scope>NUCLEOTIDE SEQUENCE [LARGE SCALE GENOMIC DNA]</scope>
    <source>
        <strain>ATCC 25618 / H37Rv</strain>
    </source>
</reference>
<reference key="2">
    <citation type="journal article" date="2007" name="Front. Biosci.">
        <title>Stress response of genes encoding putative stress signaling molecules of Mycobacterium tuberculosis.</title>
        <authorList>
            <person name="Dhandayuthapani S."/>
        </authorList>
    </citation>
    <scope>INDUCTION</scope>
</reference>
<reference key="3">
    <citation type="journal article" date="2008" name="FEBS J.">
        <title>Loss of kinase activity in Mycobacterium tuberculosis multidomain protein Rv1364c.</title>
        <authorList>
            <person name="Sachdeva P."/>
            <person name="Narayan A."/>
            <person name="Misra R."/>
            <person name="Brahmachari V."/>
            <person name="Singh Y."/>
        </authorList>
    </citation>
    <scope>COFACTOR</scope>
    <scope>BIOPHYSICOCHEMICAL PROPERTIES</scope>
    <scope>DOMAIN</scope>
    <scope>MUTAGENESIS OF ASP-211 AND ASP-328</scope>
</reference>
<reference key="4">
    <citation type="journal article" date="2009" name="J. Biol. Chem.">
        <title>Interdomain communication in the Mycobacterium tuberculosis environmental phosphatase Rv1364c.</title>
        <authorList>
            <person name="Greenstein A.E."/>
            <person name="Hammel M."/>
            <person name="Cavazos A."/>
            <person name="Alber T."/>
        </authorList>
    </citation>
    <scope>FUNCTION</scope>
    <scope>CATALYTIC ACTIVITY</scope>
    <scope>COFACTOR</scope>
    <scope>ACTIVITY REGULATION</scope>
    <scope>BIOPHYSICOCHEMICAL PROPERTIES</scope>
    <scope>SUBUNIT</scope>
    <scope>DOMAIN</scope>
    <scope>PHOSPHORYLATION AT SER-600</scope>
    <scope>MUTAGENESIS OF ASP-328; GLU-444; ASN-448; HIS-452 AND SER-600</scope>
</reference>
<reference key="5">
    <citation type="journal article" date="2011" name="Mol. Cell. Proteomics">
        <title>Proteogenomic analysis of Mycobacterium tuberculosis by high resolution mass spectrometry.</title>
        <authorList>
            <person name="Kelkar D.S."/>
            <person name="Kumar D."/>
            <person name="Kumar P."/>
            <person name="Balakrishnan L."/>
            <person name="Muthusamy B."/>
            <person name="Yadav A.K."/>
            <person name="Shrivastava P."/>
            <person name="Marimuthu A."/>
            <person name="Anand S."/>
            <person name="Sundaram H."/>
            <person name="Kingsbury R."/>
            <person name="Harsha H.C."/>
            <person name="Nair B."/>
            <person name="Prasad T.S."/>
            <person name="Chauhan D.S."/>
            <person name="Katoch K."/>
            <person name="Katoch V.M."/>
            <person name="Kumar P."/>
            <person name="Chaerkady R."/>
            <person name="Ramachandran S."/>
            <person name="Dash D."/>
            <person name="Pandey A."/>
        </authorList>
    </citation>
    <scope>IDENTIFICATION BY MASS SPECTROMETRY [LARGE SCALE ANALYSIS]</scope>
    <source>
        <strain>ATCC 25618 / H37Rv</strain>
    </source>
</reference>
<reference key="6">
    <citation type="journal article" date="2019" name="J. Bacteriol.">
        <title>Tuning the Mycobacterium tuberculosis alternative sigma factor SigF through the multidomain regulator Rv1364c and osmosensory kinase protein kinase D.</title>
        <authorList>
            <person name="Misra R."/>
            <person name="Menon D."/>
            <person name="Arora G."/>
            <person name="Virmani R."/>
            <person name="Gaur M."/>
            <person name="Naz S."/>
            <person name="Jaisinghani N."/>
            <person name="Bhaduri A."/>
            <person name="Bothra A."/>
            <person name="Maji A."/>
            <person name="Singhal A."/>
            <person name="Karwal P."/>
            <person name="Hentschker C."/>
            <person name="Becher D."/>
            <person name="Rao V."/>
            <person name="Nandicoori V.K."/>
            <person name="Gandotra S."/>
            <person name="Singh Y."/>
        </authorList>
    </citation>
    <scope>FUNCTION</scope>
    <scope>CATALYTIC ACTIVITY</scope>
    <scope>OVEREXPRESSION</scope>
    <scope>INTERACTION WITH SIGF</scope>
    <scope>PHOSPHORYLATION AT THR-54; THR-81; THR-299; THR-390; SER-506; THR-520; THR-568 AND SER-600</scope>
    <scope>MUTAGENESIS OF ASP-211; ASP-328; GLU-444; ASN-448 AND SER-600</scope>
</reference>
<reference evidence="18" key="7">
    <citation type="journal article" date="2010" name="Biochem. Biophys. Res. Commun.">
        <title>Role of a PAS sensor domain in the Mycobacterium tuberculosis transcription regulator Rv1364c.</title>
        <authorList>
            <person name="Jaiswal R.K."/>
            <person name="Manjeera G."/>
            <person name="Gopal B."/>
        </authorList>
    </citation>
    <scope>X-RAY CRYSTALLOGRAPHY (2.30 ANGSTROMS) OF 1-163</scope>
</reference>
<reference evidence="15 16 17" key="8">
    <citation type="journal article" date="2011" name="Structure">
        <title>Structural characterization of the multidomain regulatory protein Rv1364c from Mycobacterium tuberculosis.</title>
        <authorList>
            <person name="King-Scott J."/>
            <person name="Konarev P.V."/>
            <person name="Panjikar S."/>
            <person name="Jordanova R."/>
            <person name="Svergun D.I."/>
            <person name="Tucker P.A."/>
        </authorList>
    </citation>
    <scope>X-RAY CRYSTALLOGRAPHY (1.62 ANGSTROMS) OF 1-147; 1-156 AND 169-539 IN COMPLEX WITH MANGANESE</scope>
    <scope>COFACTOR</scope>
    <scope>BIOPHYSICOCHEMICAL PROPERTIES</scope>
    <scope>SUBUNIT</scope>
</reference>
<feature type="chain" id="PRO_0000103833" description="Multidomain regulatory protein Rv1364c">
    <location>
        <begin position="1"/>
        <end position="653"/>
    </location>
</feature>
<feature type="domain" description="PAC" evidence="1">
    <location>
        <begin position="86"/>
        <end position="142"/>
    </location>
</feature>
<feature type="domain" description="PPM-type phosphatase" evidence="3">
    <location>
        <begin position="177"/>
        <end position="396"/>
    </location>
</feature>
<feature type="domain" description="STAS" evidence="2">
    <location>
        <begin position="546"/>
        <end position="653"/>
    </location>
</feature>
<feature type="region of interest" description="Anti-sigma factor kinase region" evidence="14">
    <location>
        <begin position="397"/>
        <end position="544"/>
    </location>
</feature>
<feature type="binding site" evidence="7">
    <location>
        <position position="211"/>
    </location>
    <ligand>
        <name>Mn(2+)</name>
        <dbReference type="ChEBI" id="CHEBI:29035"/>
        <label>1</label>
    </ligand>
</feature>
<feature type="binding site" evidence="7">
    <location>
        <position position="211"/>
    </location>
    <ligand>
        <name>Mn(2+)</name>
        <dbReference type="ChEBI" id="CHEBI:29035"/>
        <label>2</label>
    </ligand>
</feature>
<feature type="binding site" evidence="7">
    <location>
        <position position="212"/>
    </location>
    <ligand>
        <name>Mn(2+)</name>
        <dbReference type="ChEBI" id="CHEBI:29035"/>
        <label>2</label>
    </ligand>
</feature>
<feature type="binding site" evidence="7">
    <location>
        <position position="328"/>
    </location>
    <ligand>
        <name>Mn(2+)</name>
        <dbReference type="ChEBI" id="CHEBI:29035"/>
        <label>1</label>
    </ligand>
</feature>
<feature type="binding site" evidence="7">
    <location>
        <position position="387"/>
    </location>
    <ligand>
        <name>Mn(2+)</name>
        <dbReference type="ChEBI" id="CHEBI:29035"/>
        <label>1</label>
    </ligand>
</feature>
<feature type="modified residue" description="Phosphothreonine; by PknD" evidence="8">
    <location>
        <position position="54"/>
    </location>
</feature>
<feature type="modified residue" description="Phosphothreonine; by PknD" evidence="8">
    <location>
        <position position="81"/>
    </location>
</feature>
<feature type="modified residue" description="Phosphothreonine; by PknD" evidence="8">
    <location>
        <position position="299"/>
    </location>
</feature>
<feature type="modified residue" description="Phosphothreonine; by PknD" evidence="8">
    <location>
        <position position="390"/>
    </location>
</feature>
<feature type="modified residue" description="Phosphoserine; by PknD" evidence="8">
    <location>
        <position position="506"/>
    </location>
</feature>
<feature type="modified residue" description="Phosphothreonine; by PknD" evidence="8">
    <location>
        <position position="520"/>
    </location>
</feature>
<feature type="modified residue" description="Phosphothreonine; by PknD" evidence="8">
    <location>
        <position position="568"/>
    </location>
</feature>
<feature type="modified residue" description="Phosphoserine; by autocatalysis" evidence="8">
    <location>
        <position position="600"/>
    </location>
</feature>
<feature type="mutagenesis site" description="Does not affect autophosphorylation. 10-fold decrease in phosphatase activity." evidence="5 8">
    <original>D</original>
    <variation>A</variation>
    <location>
        <position position="211"/>
    </location>
</feature>
<feature type="mutagenesis site" description="Leads to the accumulation of the autophosphorylated protein. 10-fold decrease in phosphatase activity." evidence="5 6 8">
    <original>D</original>
    <variation>A</variation>
    <location>
        <position position="328"/>
    </location>
</feature>
<feature type="mutagenesis site" description="Strong decrease in ATPase activity. Abolishes autophosphorylation." evidence="8">
    <original>E</original>
    <variation>A</variation>
    <location>
        <position position="444"/>
    </location>
</feature>
<feature type="mutagenesis site" description="Abolishes autophosphorylation." evidence="6">
    <original>E</original>
    <variation>K</variation>
    <location>
        <position position="444"/>
    </location>
</feature>
<feature type="mutagenesis site" description="Strong decrease in ATPase activity. Abolishes autophosphorylation." evidence="8">
    <original>N</original>
    <variation>A</variation>
    <location>
        <position position="448"/>
    </location>
</feature>
<feature type="mutagenesis site" description="Abolishes autophosphorylation." evidence="6">
    <original>N</original>
    <variation>K</variation>
    <location>
        <position position="448"/>
    </location>
</feature>
<feature type="mutagenesis site" description="Abolishes autophosphorylation." evidence="6">
    <original>H</original>
    <variation>A</variation>
    <location>
        <position position="452"/>
    </location>
</feature>
<feature type="mutagenesis site" description="Decreases ATPase activity. Abolishes autophosphorylation. Can still be phosphorylated by PknD." evidence="6 8">
    <original>S</original>
    <variation>A</variation>
    <location>
        <position position="600"/>
    </location>
</feature>
<feature type="mutagenesis site" description="Does not affect ATPase activity. Abolishes autophosphorylation." evidence="8">
    <original>S</original>
    <variation>E</variation>
    <location>
        <position position="600"/>
    </location>
</feature>
<feature type="helix" evidence="19">
    <location>
        <begin position="7"/>
        <end position="10"/>
    </location>
</feature>
<feature type="helix" evidence="19">
    <location>
        <begin position="14"/>
        <end position="23"/>
    </location>
</feature>
<feature type="strand" evidence="19">
    <location>
        <begin position="25"/>
        <end position="32"/>
    </location>
</feature>
<feature type="turn" evidence="19">
    <location>
        <begin position="33"/>
        <end position="36"/>
    </location>
</feature>
<feature type="strand" evidence="19">
    <location>
        <begin position="37"/>
        <end position="41"/>
    </location>
</feature>
<feature type="helix" evidence="19">
    <location>
        <begin position="43"/>
        <end position="48"/>
    </location>
</feature>
<feature type="helix" evidence="19">
    <location>
        <begin position="59"/>
        <end position="62"/>
    </location>
</feature>
<feature type="helix" evidence="19">
    <location>
        <begin position="64"/>
        <end position="68"/>
    </location>
</feature>
<feature type="helix" evidence="19">
    <location>
        <begin position="71"/>
        <end position="81"/>
    </location>
</feature>
<feature type="strand" evidence="19">
    <location>
        <begin position="85"/>
        <end position="99"/>
    </location>
</feature>
<feature type="strand" evidence="19">
    <location>
        <begin position="101"/>
        <end position="114"/>
    </location>
</feature>
<feature type="strand" evidence="19">
    <location>
        <begin position="120"/>
        <end position="129"/>
    </location>
</feature>
<feature type="helix" evidence="19">
    <location>
        <begin position="131"/>
        <end position="149"/>
    </location>
</feature>
<feature type="strand" evidence="20">
    <location>
        <begin position="169"/>
        <end position="171"/>
    </location>
</feature>
<feature type="strand" evidence="20">
    <location>
        <begin position="176"/>
        <end position="183"/>
    </location>
</feature>
<feature type="strand" evidence="20">
    <location>
        <begin position="185"/>
        <end position="188"/>
    </location>
</feature>
<feature type="strand" evidence="20">
    <location>
        <begin position="193"/>
        <end position="200"/>
    </location>
</feature>
<feature type="strand" evidence="20">
    <location>
        <begin position="202"/>
        <end position="211"/>
    </location>
</feature>
<feature type="helix" evidence="20">
    <location>
        <begin position="217"/>
        <end position="235"/>
    </location>
</feature>
<feature type="helix" evidence="20">
    <location>
        <begin position="240"/>
        <end position="250"/>
    </location>
</feature>
<feature type="helix" evidence="20">
    <location>
        <begin position="251"/>
        <end position="253"/>
    </location>
</feature>
<feature type="strand" evidence="20">
    <location>
        <begin position="261"/>
        <end position="268"/>
    </location>
</feature>
<feature type="turn" evidence="20">
    <location>
        <begin position="269"/>
        <end position="271"/>
    </location>
</feature>
<feature type="strand" evidence="20">
    <location>
        <begin position="273"/>
        <end position="281"/>
    </location>
</feature>
<feature type="strand" evidence="20">
    <location>
        <begin position="285"/>
        <end position="287"/>
    </location>
</feature>
<feature type="strand" evidence="20">
    <location>
        <begin position="293"/>
        <end position="295"/>
    </location>
</feature>
<feature type="strand" evidence="20">
    <location>
        <begin position="313"/>
        <end position="316"/>
    </location>
</feature>
<feature type="strand" evidence="20">
    <location>
        <begin position="322"/>
        <end position="326"/>
    </location>
</feature>
<feature type="turn" evidence="20">
    <location>
        <begin position="328"/>
        <end position="331"/>
    </location>
</feature>
<feature type="helix" evidence="20">
    <location>
        <begin position="338"/>
        <end position="352"/>
    </location>
</feature>
<feature type="helix" evidence="20">
    <location>
        <begin position="367"/>
        <end position="381"/>
    </location>
</feature>
<feature type="strand" evidence="20">
    <location>
        <begin position="389"/>
        <end position="396"/>
    </location>
</feature>
<feature type="strand" evidence="20">
    <location>
        <begin position="403"/>
        <end position="407"/>
    </location>
</feature>
<feature type="helix" evidence="20">
    <location>
        <begin position="413"/>
        <end position="428"/>
    </location>
</feature>
<feature type="helix" evidence="20">
    <location>
        <begin position="432"/>
        <end position="452"/>
    </location>
</feature>
<feature type="strand" evidence="20">
    <location>
        <begin position="462"/>
        <end position="468"/>
    </location>
</feature>
<feature type="strand" evidence="20">
    <location>
        <begin position="472"/>
        <end position="481"/>
    </location>
</feature>
<feature type="helix" evidence="20">
    <location>
        <begin position="498"/>
        <end position="502"/>
    </location>
</feature>
<feature type="strand" evidence="20">
    <location>
        <begin position="505"/>
        <end position="513"/>
    </location>
</feature>
<feature type="strand" evidence="20">
    <location>
        <begin position="516"/>
        <end position="524"/>
    </location>
</feature>
<feature type="strand" evidence="20">
    <location>
        <begin position="526"/>
        <end position="528"/>
    </location>
</feature>
<comment type="function">
    <text evidence="6 8">Primarily acts as an independent SigF regulator that is sensitive to the osmosensory signal, mediating the cross talk of PknD with the SigF regulon (PubMed:30642988). Possesses both phosphatase and kinase activities (PubMed:19700407, PubMed:30642988). The kinase domain functions as a classic anti-sigma factor-like kinase to phosphorylate the anti-anti-sigma factor domain at the canonical regulatory site, and the phosphatase domain antagonizes this activity (PubMed:19700407).</text>
</comment>
<comment type="catalytic activity">
    <reaction evidence="3 6 8">
        <text>O-phospho-L-seryl-[protein] + H2O = L-seryl-[protein] + phosphate</text>
        <dbReference type="Rhea" id="RHEA:20629"/>
        <dbReference type="Rhea" id="RHEA-COMP:9863"/>
        <dbReference type="Rhea" id="RHEA-COMP:11604"/>
        <dbReference type="ChEBI" id="CHEBI:15377"/>
        <dbReference type="ChEBI" id="CHEBI:29999"/>
        <dbReference type="ChEBI" id="CHEBI:43474"/>
        <dbReference type="ChEBI" id="CHEBI:83421"/>
        <dbReference type="EC" id="3.1.3.16"/>
    </reaction>
</comment>
<comment type="catalytic activity">
    <reaction evidence="3">
        <text>O-phospho-L-threonyl-[protein] + H2O = L-threonyl-[protein] + phosphate</text>
        <dbReference type="Rhea" id="RHEA:47004"/>
        <dbReference type="Rhea" id="RHEA-COMP:11060"/>
        <dbReference type="Rhea" id="RHEA-COMP:11605"/>
        <dbReference type="ChEBI" id="CHEBI:15377"/>
        <dbReference type="ChEBI" id="CHEBI:30013"/>
        <dbReference type="ChEBI" id="CHEBI:43474"/>
        <dbReference type="ChEBI" id="CHEBI:61977"/>
        <dbReference type="EC" id="3.1.3.16"/>
    </reaction>
</comment>
<comment type="catalytic activity">
    <reaction evidence="6 8">
        <text>L-seryl-[protein] + ATP = O-phospho-L-seryl-[protein] + ADP + H(+)</text>
        <dbReference type="Rhea" id="RHEA:17989"/>
        <dbReference type="Rhea" id="RHEA-COMP:9863"/>
        <dbReference type="Rhea" id="RHEA-COMP:11604"/>
        <dbReference type="ChEBI" id="CHEBI:15378"/>
        <dbReference type="ChEBI" id="CHEBI:29999"/>
        <dbReference type="ChEBI" id="CHEBI:30616"/>
        <dbReference type="ChEBI" id="CHEBI:83421"/>
        <dbReference type="ChEBI" id="CHEBI:456216"/>
        <dbReference type="EC" id="2.7.11.1"/>
    </reaction>
</comment>
<comment type="catalytic activity">
    <reaction evidence="12">
        <text>L-threonyl-[protein] + ATP = O-phospho-L-threonyl-[protein] + ADP + H(+)</text>
        <dbReference type="Rhea" id="RHEA:46608"/>
        <dbReference type="Rhea" id="RHEA-COMP:11060"/>
        <dbReference type="Rhea" id="RHEA-COMP:11605"/>
        <dbReference type="ChEBI" id="CHEBI:15378"/>
        <dbReference type="ChEBI" id="CHEBI:30013"/>
        <dbReference type="ChEBI" id="CHEBI:30616"/>
        <dbReference type="ChEBI" id="CHEBI:61977"/>
        <dbReference type="ChEBI" id="CHEBI:456216"/>
        <dbReference type="EC" id="2.7.11.1"/>
    </reaction>
</comment>
<comment type="cofactor">
    <cofactor evidence="3 5 6 7">
        <name>Mn(2+)</name>
        <dbReference type="ChEBI" id="CHEBI:29035"/>
    </cofactor>
    <cofactor evidence="3 6">
        <name>Mg(2+)</name>
        <dbReference type="ChEBI" id="CHEBI:18420"/>
    </cofactor>
    <text evidence="3 7">Binds 2 manganese or magnesium ions per subunit.</text>
</comment>
<comment type="activity regulation">
    <text evidence="6">The phosphatase domain is activated by the anti-sigma factor kinase domain.</text>
</comment>
<comment type="biophysicochemical properties">
    <kinetics>
        <KM evidence="6">19.1 mM for pNPP</KM>
        <KM evidence="7">31.2 mM for pNPP</KM>
        <Vmax evidence="7">0.02 umol/min/mg enzyme with pNPP as substrate</Vmax>
        <text evidence="6">kcat is 14.2 min(-1) for pNPP hydrolysis.</text>
    </kinetics>
    <phDependence>
        <text evidence="5 6">Optimum pH is 8.5 for pNPP hydrolysis (PubMed:19016841). Optimum pH is 8.0 for pNPP hydrolysis (PubMed:19700407).</text>
    </phDependence>
    <temperatureDependence>
        <text evidence="5">Optimum temperature is 37 degrees Celsius for phosphatase activity.</text>
    </temperatureDependence>
</comment>
<comment type="subunit">
    <text evidence="6 7 8">Exists in solution as both monomer and dimer (PubMed:21220116). Both the phosphorylated and unphosphorylated proteins form extended dimers (PubMed:19700407). Interacts with SigF (PubMed:30642988). Can efficiently bind to SigF independently of its autophosphorylation (PubMed:30642988). Interaction between SigF and Rv1364c is reduced significantly upon the phosphorylation of both proteins by PknD (PubMed:30642988).</text>
</comment>
<comment type="interaction">
    <interactant intactId="EBI-2602906">
        <id>P9WLZ7</id>
    </interactant>
    <interactant intactId="EBI-2602906">
        <id>P9WLZ7</id>
        <label>Rv1364c</label>
    </interactant>
    <organismsDiffer>false</organismsDiffer>
    <experiments>5</experiments>
</comment>
<comment type="induction">
    <text evidence="4">Induced by heat stress.</text>
</comment>
<comment type="domain">
    <text evidence="6 13 14">Multidomain protein in which the components of the entire signal transduction cascade for SigF regulation appear to be encoded in a single polypeptide. Contains an N-terminal PAS sensor domain, followed by an adjacent PAC (PAS domain-associated C-terminus) region, a phosphatase domain, an anti-sigma factor kinase domain, and a C-terminal anti-anti-sigma factor domain (or substrate domain) (Probable). Phosphorylation at Ser-600 leads to a change in the overall shape of the dimer (PubMed:19700407).</text>
</comment>
<comment type="PTM">
    <text evidence="6 8">Autophosphorylated (PubMed:19700407, PubMed:30642988). Phosphorylated by PknD on multiple threonine and serine residues (PubMed:30642988). Phosphorylation is antagonized by the phosphatase activity (PubMed:19700407).</text>
</comment>
<comment type="miscellaneous">
    <text evidence="8">Overexpression switch off espA induction under osmotic stress.</text>
</comment>
<proteinExistence type="evidence at protein level"/>
<protein>
    <recommendedName>
        <fullName evidence="10">Multidomain regulatory protein Rv1364c</fullName>
    </recommendedName>
    <alternativeName>
        <fullName evidence="12">Anti-sigma-F factor Rv1364c</fullName>
        <shortName evidence="11">Anti-SigF factor</shortName>
    </alternativeName>
    <alternativeName>
        <fullName evidence="12">Protein-serine/threonine phosphatase</fullName>
        <ecNumber evidence="6 8">3.1.3.16</ecNumber>
    </alternativeName>
    <alternativeName>
        <fullName evidence="9">Putative multidomain regulator of SigF</fullName>
        <shortName evidence="9">MursiF</shortName>
    </alternativeName>
    <alternativeName>
        <fullName evidence="12">Serine/threonine-protein kinase</fullName>
        <ecNumber evidence="6 8">2.7.11.1</ecNumber>
    </alternativeName>
</protein>
<name>MTDRP_MYCTU</name>
<accession>P9WLZ7</accession>
<accession>L0T6M8</accession>
<accession>Q11034</accession>
<gene>
    <name type="ordered locus">Rv1364c</name>
    <name type="ORF">MTCY02B10.28c</name>
</gene>